<sequence>MERIKELRNLMSQSRTREILTKTTVDHMAIIKKYTSGRQEKNPSLRMKWMMAMKYPITADKRITEMIPERNEQGQTLWSKMNDAGSDRVMVSPLAVTWWNRNGPVTSTVHYPKIYKTYFEKVERLKHGTFGPVHFRNQVKIRRRVDINPGHADLSAKEAQDVIMEVVFPNEVGARILTSESQLTITKEKKEELQNCKISPLMVAYMLERELVRKTRFLPVAGGTSSVYIEVLHLTQGTCWEQMYTPGGEVRNDDVDQSLIIAARNIVRRAAVSADPLASLLEMCHSTQIGGTRMVDILRQNPTEEQAVDICKAAMGLRISSSFSFGGFTFKRTSGSSVKREEEVLTGNLQTLKIKVHEGYEEFTMVGKRATAILRKATRRLIQLIVSGRDEQSIVEAIVVAMVFSQEDCMIKAVRGDLNFVNRANQRLNPMHQLLRHFQKDAKVLFQNWGIEPIDNVMGMIGILPDMTSSTEMSMRGVRVSKMGVDEYSNAERVVVSIDRFLRVRDQRGNVLLSPEEVSETQGTEKLTITYSSSMMWEINGPESVLVNTYQWIIRNWETVKIQWSQNPTMLYNKMEFEPFQSLVPKAIRGQYSGFVRTLFQQMRDVLGTFDTTQIIKLLPFAAAPPKQSRMQFSSLTVNVRGSGMRILVRGNSPVFNYNKTTKRLTVLGKDAGTLTEDPDEGTAGVESAVLRGFLILGKEDRRYGPALSINELSNLAKGEKANVLIGQGDVVLVMKRKRDSSILTDSQTATKRIRMAIN</sequence>
<feature type="chain" id="PRO_0000279651" description="Polymerase basic protein 2">
    <location>
        <begin position="1"/>
        <end position="759"/>
    </location>
</feature>
<feature type="short sequence motif" description="Nuclear localization signal" evidence="1">
    <location>
        <begin position="736"/>
        <end position="739"/>
    </location>
</feature>
<feature type="site" description="Mammalian adaptation" evidence="1">
    <location>
        <position position="627"/>
    </location>
</feature>
<feature type="sequence conflict" description="In Ref. 2; ABF21235." ref="2">
    <original>S</original>
    <variation>P</variation>
    <location>
        <position position="469"/>
    </location>
</feature>
<feature type="sequence conflict" description="In Ref. 2; ABF21235." ref="2">
    <original>N</original>
    <variation>I</variation>
    <location>
        <position position="759"/>
    </location>
</feature>
<organism>
    <name type="scientific">Influenza A virus (strain A/USSR/90/1977 H1N1)</name>
    <dbReference type="NCBI Taxonomy" id="381516"/>
    <lineage>
        <taxon>Viruses</taxon>
        <taxon>Riboviria</taxon>
        <taxon>Orthornavirae</taxon>
        <taxon>Negarnaviricota</taxon>
        <taxon>Polyploviricotina</taxon>
        <taxon>Insthoviricetes</taxon>
        <taxon>Articulavirales</taxon>
        <taxon>Orthomyxoviridae</taxon>
        <taxon>Alphainfluenzavirus</taxon>
        <taxon>Alphainfluenzavirus influenzae</taxon>
        <taxon>Influenza A virus</taxon>
    </lineage>
</organism>
<comment type="function">
    <text evidence="1">Plays an essential role in transcription initiation and cap-stealing mechanism, in which cellular capped pre-mRNAs are used to generate primers for viral transcription. Recognizes and binds the 7-methylguanosine-containing cap of the target pre-RNA which is subsequently cleaved after 10-13 nucleotides by the viral protein PA. Plays a role in the initiation of the viral genome replication and modulates the activity of the ribonucleoprotein (RNP) complex. In addition, participates in the inhibition of type I interferon induction through interaction with and inhibition of the host mitochondrial antiviral signaling protein MAVS.</text>
</comment>
<comment type="subunit">
    <text evidence="1">Influenza RNA polymerase is composed of three subunits: PB1, PB2 and PA. Interacts (via N-terminus) with PB1 (via C-terminus). Interacts with nucleoprotein NP (via N-terminus). Interacts (via N-terminus) with host MAVS (via N-terminus); this interaction inhibits host innate immune response.</text>
</comment>
<comment type="subcellular location">
    <subcellularLocation>
        <location evidence="1">Virion</location>
    </subcellularLocation>
    <subcellularLocation>
        <location evidence="1">Host nucleus</location>
    </subcellularLocation>
    <subcellularLocation>
        <location evidence="1">Host mitochondrion</location>
    </subcellularLocation>
</comment>
<comment type="similarity">
    <text evidence="1">Belongs to the influenza viruses PB2 family.</text>
</comment>
<accession>Q1WNZ9</accession>
<accession>Q1K9I6</accession>
<name>PB2_I77AB</name>
<proteinExistence type="inferred from homology"/>
<protein>
    <recommendedName>
        <fullName evidence="1">Polymerase basic protein 2</fullName>
    </recommendedName>
    <alternativeName>
        <fullName evidence="1">RNA-directed RNA polymerase subunit P3</fullName>
    </alternativeName>
</protein>
<evidence type="ECO:0000255" key="1">
    <source>
        <dbReference type="HAMAP-Rule" id="MF_04062"/>
    </source>
</evidence>
<reference key="1">
    <citation type="submission" date="2006-03" db="EMBL/GenBank/DDBJ databases">
        <title>The NIAID influenza genome sequencing project.</title>
        <authorList>
            <person name="Ghedin E."/>
            <person name="Spiro D."/>
            <person name="Miller N."/>
            <person name="Zaborsky J."/>
            <person name="Feldblyum T."/>
            <person name="Subbu V."/>
            <person name="Shumway M."/>
            <person name="Sparenborg J."/>
            <person name="Groveman L."/>
            <person name="Halpin R."/>
            <person name="Sitz J."/>
            <person name="Koo H."/>
            <person name="Salzberg S.L."/>
            <person name="Webster R.G."/>
            <person name="Hoffmann E."/>
            <person name="Krauss S."/>
            <person name="Naeve C."/>
            <person name="Bao Y."/>
            <person name="Bolotov P."/>
            <person name="Dernovoy D."/>
            <person name="Kiryutin B."/>
            <person name="Lipman D.J."/>
            <person name="Tatusova T."/>
        </authorList>
    </citation>
    <scope>NUCLEOTIDE SEQUENCE [GENOMIC RNA]</scope>
</reference>
<reference key="2">
    <citation type="submission" date="2006-04" db="EMBL/GenBank/DDBJ databases">
        <title>Complete genome sequencing and analysis of selected influenza virus vaccine strains spanning six decades (1933-1999).</title>
        <authorList>
            <person name="Mbawuike I.N."/>
            <person name="Zhang Y."/>
            <person name="Yamada R.E."/>
            <person name="Nino D."/>
            <person name="Bui H.-H."/>
            <person name="Sette A."/>
            <person name="Couch R.B."/>
        </authorList>
    </citation>
    <scope>NUCLEOTIDE SEQUENCE [GENOMIC RNA]</scope>
</reference>
<dbReference type="EMBL" id="CY010379">
    <property type="protein sequence ID" value="ABD95360.1"/>
    <property type="molecule type" value="Genomic_RNA"/>
</dbReference>
<dbReference type="EMBL" id="DQ508894">
    <property type="protein sequence ID" value="ABF21235.1"/>
    <property type="molecule type" value="Genomic_RNA"/>
</dbReference>
<dbReference type="SMR" id="Q1WNZ9"/>
<dbReference type="PRO" id="PR:Q1WNZ9"/>
<dbReference type="Proteomes" id="UP000007793">
    <property type="component" value="Genome"/>
</dbReference>
<dbReference type="Proteomes" id="UP000121508">
    <property type="component" value="Genome"/>
</dbReference>
<dbReference type="GO" id="GO:0033650">
    <property type="term" value="C:host cell mitochondrion"/>
    <property type="evidence" value="ECO:0007669"/>
    <property type="project" value="UniProtKB-SubCell"/>
</dbReference>
<dbReference type="GO" id="GO:0042025">
    <property type="term" value="C:host cell nucleus"/>
    <property type="evidence" value="ECO:0007669"/>
    <property type="project" value="UniProtKB-SubCell"/>
</dbReference>
<dbReference type="GO" id="GO:0044423">
    <property type="term" value="C:virion component"/>
    <property type="evidence" value="ECO:0007669"/>
    <property type="project" value="UniProtKB-UniRule"/>
</dbReference>
<dbReference type="GO" id="GO:0003723">
    <property type="term" value="F:RNA binding"/>
    <property type="evidence" value="ECO:0007669"/>
    <property type="project" value="UniProtKB-UniRule"/>
</dbReference>
<dbReference type="GO" id="GO:0003968">
    <property type="term" value="F:RNA-directed RNA polymerase activity"/>
    <property type="evidence" value="ECO:0007669"/>
    <property type="project" value="UniProtKB-UniRule"/>
</dbReference>
<dbReference type="GO" id="GO:0006370">
    <property type="term" value="P:7-methylguanosine mRNA capping"/>
    <property type="evidence" value="ECO:0007669"/>
    <property type="project" value="UniProtKB-UniRule"/>
</dbReference>
<dbReference type="GO" id="GO:0075526">
    <property type="term" value="P:cap snatching"/>
    <property type="evidence" value="ECO:0007669"/>
    <property type="project" value="UniProtKB-UniRule"/>
</dbReference>
<dbReference type="GO" id="GO:0006351">
    <property type="term" value="P:DNA-templated transcription"/>
    <property type="evidence" value="ECO:0007669"/>
    <property type="project" value="UniProtKB-UniRule"/>
</dbReference>
<dbReference type="GO" id="GO:0039545">
    <property type="term" value="P:symbiont-mediated suppression of host cytoplasmic pattern recognition receptor signaling pathway via inhibition of MAVS activity"/>
    <property type="evidence" value="ECO:0007669"/>
    <property type="project" value="UniProtKB-UniRule"/>
</dbReference>
<dbReference type="GO" id="GO:0039657">
    <property type="term" value="P:symbiont-mediated suppression of host gene expression"/>
    <property type="evidence" value="ECO:0007669"/>
    <property type="project" value="UniProtKB-KW"/>
</dbReference>
<dbReference type="GO" id="GO:0039523">
    <property type="term" value="P:symbiont-mediated suppression of host mRNA transcription via inhibition of RNA polymerase II activity"/>
    <property type="evidence" value="ECO:0007669"/>
    <property type="project" value="UniProtKB-UniRule"/>
</dbReference>
<dbReference type="GO" id="GO:0039694">
    <property type="term" value="P:viral RNA genome replication"/>
    <property type="evidence" value="ECO:0007669"/>
    <property type="project" value="InterPro"/>
</dbReference>
<dbReference type="FunFam" id="3.30.30.90:FF:000001">
    <property type="entry name" value="Polymerase basic protein 2"/>
    <property type="match status" value="1"/>
</dbReference>
<dbReference type="Gene3D" id="3.30.30.90">
    <property type="entry name" value="Polymerase Basic Protein 2, C-terminal domain"/>
    <property type="match status" value="1"/>
</dbReference>
<dbReference type="HAMAP" id="MF_04062">
    <property type="entry name" value="INV_PB2"/>
    <property type="match status" value="1"/>
</dbReference>
<dbReference type="InterPro" id="IPR049110">
    <property type="entry name" value="Flu_PB2_2nd"/>
</dbReference>
<dbReference type="InterPro" id="IPR049114">
    <property type="entry name" value="Flu_PB2_6th"/>
</dbReference>
<dbReference type="InterPro" id="IPR049115">
    <property type="entry name" value="Flu_PB2_C"/>
</dbReference>
<dbReference type="InterPro" id="IPR048298">
    <property type="entry name" value="Flu_PB2_CAP-bd"/>
</dbReference>
<dbReference type="InterPro" id="IPR049111">
    <property type="entry name" value="Flu_PB2_middle"/>
</dbReference>
<dbReference type="InterPro" id="IPR049106">
    <property type="entry name" value="Flu_PB2_N"/>
</dbReference>
<dbReference type="InterPro" id="IPR001591">
    <property type="entry name" value="INV_PB2"/>
</dbReference>
<dbReference type="InterPro" id="IPR049113">
    <property type="entry name" value="PB2_helical"/>
</dbReference>
<dbReference type="InterPro" id="IPR037258">
    <property type="entry name" value="PDB2_C"/>
</dbReference>
<dbReference type="Pfam" id="PF20947">
    <property type="entry name" value="Flu_PB2_1st"/>
    <property type="match status" value="1"/>
</dbReference>
<dbReference type="Pfam" id="PF20948">
    <property type="entry name" value="Flu_PB2_2nd"/>
    <property type="match status" value="1"/>
</dbReference>
<dbReference type="Pfam" id="PF20949">
    <property type="entry name" value="Flu_PB2_3rd"/>
    <property type="match status" value="1"/>
</dbReference>
<dbReference type="Pfam" id="PF20950">
    <property type="entry name" value="Flu_PB2_4th"/>
    <property type="match status" value="1"/>
</dbReference>
<dbReference type="Pfam" id="PF00604">
    <property type="entry name" value="Flu_PB2_5th"/>
    <property type="match status" value="1"/>
</dbReference>
<dbReference type="Pfam" id="PF20951">
    <property type="entry name" value="Flu_PB2_6th"/>
    <property type="match status" value="1"/>
</dbReference>
<dbReference type="Pfam" id="PF20952">
    <property type="entry name" value="Flu_PB2_7th"/>
    <property type="match status" value="1"/>
</dbReference>
<dbReference type="SUPFAM" id="SSF160453">
    <property type="entry name" value="PB2 C-terminal domain-like"/>
    <property type="match status" value="1"/>
</dbReference>
<organismHost>
    <name type="scientific">Aves</name>
    <dbReference type="NCBI Taxonomy" id="8782"/>
</organismHost>
<organismHost>
    <name type="scientific">Homo sapiens</name>
    <name type="common">Human</name>
    <dbReference type="NCBI Taxonomy" id="9606"/>
</organismHost>
<organismHost>
    <name type="scientific">Sus scrofa</name>
    <name type="common">Pig</name>
    <dbReference type="NCBI Taxonomy" id="9823"/>
</organismHost>
<gene>
    <name evidence="1" type="primary">PB2</name>
</gene>
<keyword id="KW-1157">Cap snatching</keyword>
<keyword id="KW-1262">Eukaryotic host gene expression shutoff by virus</keyword>
<keyword id="KW-1191">Eukaryotic host transcription shutoff by virus</keyword>
<keyword id="KW-1190">Host gene expression shutoff by virus</keyword>
<keyword id="KW-1045">Host mitochondrion</keyword>
<keyword id="KW-1048">Host nucleus</keyword>
<keyword id="KW-0945">Host-virus interaction</keyword>
<keyword id="KW-1090">Inhibition of host innate immune response by virus</keyword>
<keyword id="KW-1097">Inhibition of host MAVS by virus</keyword>
<keyword id="KW-1113">Inhibition of host RLR pathway by virus</keyword>
<keyword id="KW-1104">Inhibition of host RNA polymerase II by virus</keyword>
<keyword id="KW-0506">mRNA capping</keyword>
<keyword id="KW-0507">mRNA processing</keyword>
<keyword id="KW-0899">Viral immunoevasion</keyword>
<keyword id="KW-1195">Viral transcription</keyword>
<keyword id="KW-0946">Virion</keyword>